<organism>
    <name type="scientific">Zea mays</name>
    <name type="common">Maize</name>
    <dbReference type="NCBI Taxonomy" id="4577"/>
    <lineage>
        <taxon>Eukaryota</taxon>
        <taxon>Viridiplantae</taxon>
        <taxon>Streptophyta</taxon>
        <taxon>Embryophyta</taxon>
        <taxon>Tracheophyta</taxon>
        <taxon>Spermatophyta</taxon>
        <taxon>Magnoliopsida</taxon>
        <taxon>Liliopsida</taxon>
        <taxon>Poales</taxon>
        <taxon>Poaceae</taxon>
        <taxon>PACMAD clade</taxon>
        <taxon>Panicoideae</taxon>
        <taxon>Andropogonodae</taxon>
        <taxon>Andropogoneae</taxon>
        <taxon>Tripsacinae</taxon>
        <taxon>Zea</taxon>
    </lineage>
</organism>
<protein>
    <recommendedName>
        <fullName evidence="3">UDP-glycosyltransferase 708A6</fullName>
        <ecNumber evidence="4">2.4.1.-</ecNumber>
    </recommendedName>
</protein>
<sequence>MAANGGDHTSARPHVVLLPSAGMGHLVPFARLAVALSEGHGCNVSVAAVQPTVSSAESRLLDALFVAAAPAVRRLDFRLAPFDESEFPGADPFFLRFEATRRSAPLLGPLLDAAEASALVTDIVLASVALPVARERGVPCYVLFTSSAAMLSLCAYFPAYLDAHAAAGSVGVGVGNVDIPGVFRIPKSSVPQALHDPDHLFTQQFVANGRCLVACDGILVNTFDAFEPDAVTALRQGSITVSGGFPPVFTVGPMLPVRFQAEETADYMRWLSAQPPRSVVYVSFGSRKAIPRDQLRELAAGLEASGKRFLWVVKSTIVDRDDTADLGGLLGDGFLERVQGRAFVTMGWVEQEEILQHGSVGLFISHCGWNSLTEAAAFGVPVLAWPRFGDQRVNAALVARSGLGAWEEGWTWDGEEGLTTRKEVAKKIKGMMGYDAVAEKAAKVGDAAAAAIAKCGTSYQSLEEFVQRCRDAERK</sequence>
<name>708A6_MAIZE</name>
<reference key="1">
    <citation type="journal article" date="2009" name="Science">
        <title>The B73 maize genome: complexity, diversity, and dynamics.</title>
        <authorList>
            <person name="Schnable P.S."/>
            <person name="Ware D."/>
            <person name="Fulton R.S."/>
            <person name="Stein J.C."/>
            <person name="Wei F."/>
            <person name="Pasternak S."/>
            <person name="Liang C."/>
            <person name="Zhang J."/>
            <person name="Fulton L."/>
            <person name="Graves T.A."/>
            <person name="Minx P."/>
            <person name="Reily A.D."/>
            <person name="Courtney L."/>
            <person name="Kruchowski S.S."/>
            <person name="Tomlinson C."/>
            <person name="Strong C."/>
            <person name="Delehaunty K."/>
            <person name="Fronick C."/>
            <person name="Courtney B."/>
            <person name="Rock S.M."/>
            <person name="Belter E."/>
            <person name="Du F."/>
            <person name="Kim K."/>
            <person name="Abbott R.M."/>
            <person name="Cotton M."/>
            <person name="Levy A."/>
            <person name="Marchetto P."/>
            <person name="Ochoa K."/>
            <person name="Jackson S.M."/>
            <person name="Gillam B."/>
            <person name="Chen W."/>
            <person name="Yan L."/>
            <person name="Higginbotham J."/>
            <person name="Cardenas M."/>
            <person name="Waligorski J."/>
            <person name="Applebaum E."/>
            <person name="Phelps L."/>
            <person name="Falcone J."/>
            <person name="Kanchi K."/>
            <person name="Thane T."/>
            <person name="Scimone A."/>
            <person name="Thane N."/>
            <person name="Henke J."/>
            <person name="Wang T."/>
            <person name="Ruppert J."/>
            <person name="Shah N."/>
            <person name="Rotter K."/>
            <person name="Hodges J."/>
            <person name="Ingenthron E."/>
            <person name="Cordes M."/>
            <person name="Kohlberg S."/>
            <person name="Sgro J."/>
            <person name="Delgado B."/>
            <person name="Mead K."/>
            <person name="Chinwalla A."/>
            <person name="Leonard S."/>
            <person name="Crouse K."/>
            <person name="Collura K."/>
            <person name="Kudrna D."/>
            <person name="Currie J."/>
            <person name="He R."/>
            <person name="Angelova A."/>
            <person name="Rajasekar S."/>
            <person name="Mueller T."/>
            <person name="Lomeli R."/>
            <person name="Scara G."/>
            <person name="Ko A."/>
            <person name="Delaney K."/>
            <person name="Wissotski M."/>
            <person name="Lopez G."/>
            <person name="Campos D."/>
            <person name="Braidotti M."/>
            <person name="Ashley E."/>
            <person name="Golser W."/>
            <person name="Kim H."/>
            <person name="Lee S."/>
            <person name="Lin J."/>
            <person name="Dujmic Z."/>
            <person name="Kim W."/>
            <person name="Talag J."/>
            <person name="Zuccolo A."/>
            <person name="Fan C."/>
            <person name="Sebastian A."/>
            <person name="Kramer M."/>
            <person name="Spiegel L."/>
            <person name="Nascimento L."/>
            <person name="Zutavern T."/>
            <person name="Miller B."/>
            <person name="Ambroise C."/>
            <person name="Muller S."/>
            <person name="Spooner W."/>
            <person name="Narechania A."/>
            <person name="Ren L."/>
            <person name="Wei S."/>
            <person name="Kumari S."/>
            <person name="Faga B."/>
            <person name="Levy M.J."/>
            <person name="McMahan L."/>
            <person name="Van Buren P."/>
            <person name="Vaughn M.W."/>
            <person name="Ying K."/>
            <person name="Yeh C.-T."/>
            <person name="Emrich S.J."/>
            <person name="Jia Y."/>
            <person name="Kalyanaraman A."/>
            <person name="Hsia A.-P."/>
            <person name="Barbazuk W.B."/>
            <person name="Baucom R.S."/>
            <person name="Brutnell T.P."/>
            <person name="Carpita N.C."/>
            <person name="Chaparro C."/>
            <person name="Chia J.-M."/>
            <person name="Deragon J.-M."/>
            <person name="Estill J.C."/>
            <person name="Fu Y."/>
            <person name="Jeddeloh J.A."/>
            <person name="Han Y."/>
            <person name="Lee H."/>
            <person name="Li P."/>
            <person name="Lisch D.R."/>
            <person name="Liu S."/>
            <person name="Liu Z."/>
            <person name="Nagel D.H."/>
            <person name="McCann M.C."/>
            <person name="SanMiguel P."/>
            <person name="Myers A.M."/>
            <person name="Nettleton D."/>
            <person name="Nguyen J."/>
            <person name="Penning B.W."/>
            <person name="Ponnala L."/>
            <person name="Schneider K.L."/>
            <person name="Schwartz D.C."/>
            <person name="Sharma A."/>
            <person name="Soderlund C."/>
            <person name="Springer N.M."/>
            <person name="Sun Q."/>
            <person name="Wang H."/>
            <person name="Waterman M."/>
            <person name="Westerman R."/>
            <person name="Wolfgruber T.K."/>
            <person name="Yang L."/>
            <person name="Yu Y."/>
            <person name="Zhang L."/>
            <person name="Zhou S."/>
            <person name="Zhu Q."/>
            <person name="Bennetzen J.L."/>
            <person name="Dawe R.K."/>
            <person name="Jiang J."/>
            <person name="Jiang N."/>
            <person name="Presting G.G."/>
            <person name="Wessler S.R."/>
            <person name="Aluru S."/>
            <person name="Martienssen R.A."/>
            <person name="Clifton S.W."/>
            <person name="McCombie W.R."/>
            <person name="Wing R.A."/>
            <person name="Wilson R.K."/>
        </authorList>
    </citation>
    <scope>NUCLEOTIDE SEQUENCE [LARGE SCALE GENOMIC DNA]</scope>
    <source>
        <strain>cv. B73</strain>
    </source>
</reference>
<reference key="2">
    <citation type="journal article" date="2009" name="PLoS Genet.">
        <title>Sequencing, mapping, and analysis of 27,455 maize full-length cDNAs.</title>
        <authorList>
            <person name="Soderlund C."/>
            <person name="Descour A."/>
            <person name="Kudrna D."/>
            <person name="Bomhoff M."/>
            <person name="Boyd L."/>
            <person name="Currie J."/>
            <person name="Angelova A."/>
            <person name="Collura K."/>
            <person name="Wissotski M."/>
            <person name="Ashley E."/>
            <person name="Morrow D."/>
            <person name="Fernandes J."/>
            <person name="Walbot V."/>
            <person name="Yu Y."/>
        </authorList>
    </citation>
    <scope>NUCLEOTIDE SEQUENCE [LARGE SCALE MRNA]</scope>
    <source>
        <strain>cv. B73</strain>
    </source>
</reference>
<reference key="3">
    <citation type="journal article" date="2013" name="J. Biol. Chem.">
        <title>Identification of a bifunctional maize C- and O-glucosyltransferase.</title>
        <authorList>
            <person name="Falcone Ferreyra M.L."/>
            <person name="Rodriguez E."/>
            <person name="Casas M.I."/>
            <person name="Labadie G."/>
            <person name="Grotewold E."/>
            <person name="Casati P."/>
        </authorList>
    </citation>
    <scope>FUNCTION</scope>
    <scope>TISSUE SPECIFICITY</scope>
</reference>
<keyword id="KW-0002">3D-structure</keyword>
<keyword id="KW-0328">Glycosyltransferase</keyword>
<keyword id="KW-1185">Reference proteome</keyword>
<keyword id="KW-0808">Transferase</keyword>
<dbReference type="EC" id="2.4.1.-" evidence="4"/>
<dbReference type="EMBL" id="BT036577">
    <property type="protein sequence ID" value="ACF81582.1"/>
    <property type="molecule type" value="mRNA"/>
</dbReference>
<dbReference type="RefSeq" id="NP_001132650.2">
    <property type="nucleotide sequence ID" value="NM_001139178.2"/>
</dbReference>
<dbReference type="RefSeq" id="XP_008647434.1">
    <property type="nucleotide sequence ID" value="XM_008649212.1"/>
</dbReference>
<dbReference type="PDB" id="6LF6">
    <property type="method" value="X-ray"/>
    <property type="resolution" value="2.04 A"/>
    <property type="chains" value="A=1-475"/>
</dbReference>
<dbReference type="PDB" id="8CGQ">
    <property type="method" value="X-ray"/>
    <property type="resolution" value="2.04 A"/>
    <property type="chains" value="A=1-474"/>
</dbReference>
<dbReference type="PDBsum" id="6LF6"/>
<dbReference type="PDBsum" id="8CGQ"/>
<dbReference type="SMR" id="A0A096SRM5"/>
<dbReference type="FunCoup" id="A0A096SRM5">
    <property type="interactions" value="3"/>
</dbReference>
<dbReference type="STRING" id="4577.A0A096SRM5"/>
<dbReference type="CAZy" id="GT1">
    <property type="family name" value="Glycosyltransferase Family 1"/>
</dbReference>
<dbReference type="PaxDb" id="4577-GRMZM2G162783_P01"/>
<dbReference type="EnsemblPlants" id="Zm00001eb280920_T001">
    <property type="protein sequence ID" value="Zm00001eb280920_P001"/>
    <property type="gene ID" value="Zm00001eb280920"/>
</dbReference>
<dbReference type="GeneID" id="100194125"/>
<dbReference type="Gramene" id="Zm00001eb280920_T001">
    <property type="protein sequence ID" value="Zm00001eb280920_P001"/>
    <property type="gene ID" value="Zm00001eb280920"/>
</dbReference>
<dbReference type="KEGG" id="zma:100194125"/>
<dbReference type="eggNOG" id="KOG1192">
    <property type="taxonomic scope" value="Eukaryota"/>
</dbReference>
<dbReference type="HOGENOM" id="CLU_001724_3_1_1"/>
<dbReference type="InParanoid" id="A0A096SRM5"/>
<dbReference type="OMA" id="LCAYFPA"/>
<dbReference type="OrthoDB" id="5835829at2759"/>
<dbReference type="Proteomes" id="UP000007305">
    <property type="component" value="Chromosome 6"/>
</dbReference>
<dbReference type="ExpressionAtlas" id="A0A096SRM5">
    <property type="expression patterns" value="baseline and differential"/>
</dbReference>
<dbReference type="GO" id="GO:0047243">
    <property type="term" value="F:flavanone 7-O-beta-glucosyltransferase activity"/>
    <property type="evidence" value="ECO:0000314"/>
    <property type="project" value="UniProtKB"/>
</dbReference>
<dbReference type="GO" id="GO:0035251">
    <property type="term" value="F:UDP-glucosyltransferase activity"/>
    <property type="evidence" value="ECO:0000314"/>
    <property type="project" value="UniProtKB"/>
</dbReference>
<dbReference type="CDD" id="cd03784">
    <property type="entry name" value="GT1_Gtf-like"/>
    <property type="match status" value="1"/>
</dbReference>
<dbReference type="FunFam" id="3.40.50.2000:FF:000124">
    <property type="entry name" value="Glycosyltransferase"/>
    <property type="match status" value="1"/>
</dbReference>
<dbReference type="FunFam" id="3.40.50.2000:FF:000127">
    <property type="entry name" value="Glycosyltransferase"/>
    <property type="match status" value="1"/>
</dbReference>
<dbReference type="Gene3D" id="3.40.50.2000">
    <property type="entry name" value="Glycogen Phosphorylase B"/>
    <property type="match status" value="2"/>
</dbReference>
<dbReference type="InterPro" id="IPR050481">
    <property type="entry name" value="UDP-glycosyltransf_plant"/>
</dbReference>
<dbReference type="InterPro" id="IPR002213">
    <property type="entry name" value="UDP_glucos_trans"/>
</dbReference>
<dbReference type="InterPro" id="IPR035595">
    <property type="entry name" value="UDP_glycos_trans_CS"/>
</dbReference>
<dbReference type="PANTHER" id="PTHR48048">
    <property type="entry name" value="GLYCOSYLTRANSFERASE"/>
    <property type="match status" value="1"/>
</dbReference>
<dbReference type="PANTHER" id="PTHR48048:SF76">
    <property type="entry name" value="UDP-GLYCOSYLTRANSFERASE 708D1-LIKE"/>
    <property type="match status" value="1"/>
</dbReference>
<dbReference type="Pfam" id="PF00201">
    <property type="entry name" value="UDPGT"/>
    <property type="match status" value="1"/>
</dbReference>
<dbReference type="SUPFAM" id="SSF53756">
    <property type="entry name" value="UDP-Glycosyltransferase/glycogen phosphorylase"/>
    <property type="match status" value="1"/>
</dbReference>
<dbReference type="PROSITE" id="PS00375">
    <property type="entry name" value="UDPGT"/>
    <property type="match status" value="1"/>
</dbReference>
<proteinExistence type="evidence at protein level"/>
<accession>A0A096SRM5</accession>
<accession>B4FHI9</accession>
<gene>
    <name evidence="3" type="primary">UGT708A6</name>
</gene>
<comment type="function">
    <text evidence="2">Bifunctional glycosyltransferase that can produce both C- and O-glycosidated flavonoids. Converts 2-hydroxynaringenin to isovitexin. Converts eriodictyol to orientin and isoorientin. Converts naringenin and eriodictyol to naringenin 7-O-glucoside and eriodictyol 7-O-glucoside, respectively.</text>
</comment>
<comment type="tissue specificity">
    <text evidence="2">Expressed in radicles, hypocotyls and juvenile leaves. Expressed at low levels in roots.</text>
</comment>
<comment type="similarity">
    <text evidence="4">Belongs to the UDP-glycosyltransferase family.</text>
</comment>
<evidence type="ECO:0000250" key="1">
    <source>
        <dbReference type="UniProtKB" id="Q9M156"/>
    </source>
</evidence>
<evidence type="ECO:0000269" key="2">
    <source>
    </source>
</evidence>
<evidence type="ECO:0000303" key="3">
    <source>
    </source>
</evidence>
<evidence type="ECO:0000305" key="4"/>
<evidence type="ECO:0007829" key="5">
    <source>
        <dbReference type="PDB" id="8CGQ"/>
    </source>
</evidence>
<feature type="chain" id="PRO_0000434461" description="UDP-glycosyltransferase 708A6">
    <location>
        <begin position="1"/>
        <end position="475"/>
    </location>
</feature>
<feature type="binding site" evidence="1">
    <location>
        <position position="286"/>
    </location>
    <ligand>
        <name>UDP-alpha-D-glucose</name>
        <dbReference type="ChEBI" id="CHEBI:58885"/>
    </ligand>
</feature>
<feature type="binding site" evidence="1">
    <location>
        <begin position="348"/>
        <end position="349"/>
    </location>
    <ligand>
        <name>UDP-alpha-D-glucose</name>
        <dbReference type="ChEBI" id="CHEBI:58885"/>
    </ligand>
</feature>
<feature type="binding site" evidence="1">
    <location>
        <begin position="366"/>
        <end position="374"/>
    </location>
    <ligand>
        <name>UDP-alpha-D-glucose</name>
        <dbReference type="ChEBI" id="CHEBI:58885"/>
    </ligand>
</feature>
<feature type="binding site" evidence="1">
    <location>
        <begin position="388"/>
        <end position="391"/>
    </location>
    <ligand>
        <name>UDP-alpha-D-glucose</name>
        <dbReference type="ChEBI" id="CHEBI:58885"/>
    </ligand>
</feature>
<feature type="sequence conflict" description="In Ref. 2; ACF81582." evidence="4" ref="2">
    <original>ALP</original>
    <variation>VLH</variation>
    <location>
        <begin position="129"/>
        <end position="131"/>
    </location>
</feature>
<feature type="sequence conflict" description="In Ref. 2; ACF81582." evidence="4" ref="2">
    <original>A</original>
    <variation>T</variation>
    <location>
        <position position="396"/>
    </location>
</feature>
<feature type="sequence conflict" description="In Ref. 2; ACF81582." evidence="4" ref="2">
    <original>K</original>
    <variation>N</variation>
    <location>
        <position position="426"/>
    </location>
</feature>
<feature type="sequence conflict" description="In Ref. 2; ACF81582." evidence="4" ref="2">
    <original>A</original>
    <variation>G</variation>
    <location>
        <position position="453"/>
    </location>
</feature>
<feature type="sequence conflict" description="In Ref. 2; ACF81582." evidence="4" ref="2">
    <original>DAERK</original>
    <variation>K</variation>
    <location>
        <begin position="471"/>
        <end position="475"/>
    </location>
</feature>
<feature type="strand" evidence="5">
    <location>
        <begin position="14"/>
        <end position="18"/>
    </location>
</feature>
<feature type="helix" evidence="5">
    <location>
        <begin position="23"/>
        <end position="40"/>
    </location>
</feature>
<feature type="strand" evidence="5">
    <location>
        <begin position="43"/>
        <end position="51"/>
    </location>
</feature>
<feature type="helix" evidence="5">
    <location>
        <begin position="55"/>
        <end position="67"/>
    </location>
</feature>
<feature type="turn" evidence="5">
    <location>
        <begin position="68"/>
        <end position="71"/>
    </location>
</feature>
<feature type="strand" evidence="5">
    <location>
        <begin position="72"/>
        <end position="77"/>
    </location>
</feature>
<feature type="helix" evidence="5">
    <location>
        <begin position="84"/>
        <end position="86"/>
    </location>
</feature>
<feature type="helix" evidence="5">
    <location>
        <begin position="92"/>
        <end position="101"/>
    </location>
</feature>
<feature type="helix" evidence="5">
    <location>
        <begin position="102"/>
        <end position="106"/>
    </location>
</feature>
<feature type="helix" evidence="5">
    <location>
        <begin position="107"/>
        <end position="114"/>
    </location>
</feature>
<feature type="strand" evidence="5">
    <location>
        <begin position="117"/>
        <end position="122"/>
    </location>
</feature>
<feature type="helix" evidence="5">
    <location>
        <begin position="123"/>
        <end position="125"/>
    </location>
</feature>
<feature type="helix" evidence="5">
    <location>
        <begin position="126"/>
        <end position="136"/>
    </location>
</feature>
<feature type="strand" evidence="5">
    <location>
        <begin position="140"/>
        <end position="144"/>
    </location>
</feature>
<feature type="helix" evidence="5">
    <location>
        <begin position="148"/>
        <end position="163"/>
    </location>
</feature>
<feature type="helix" evidence="5">
    <location>
        <begin position="187"/>
        <end position="189"/>
    </location>
</feature>
<feature type="helix" evidence="5">
    <location>
        <begin position="192"/>
        <end position="195"/>
    </location>
</feature>
<feature type="helix" evidence="5">
    <location>
        <begin position="200"/>
        <end position="211"/>
    </location>
</feature>
<feature type="helix" evidence="5">
    <location>
        <begin position="212"/>
        <end position="214"/>
    </location>
</feature>
<feature type="strand" evidence="5">
    <location>
        <begin position="215"/>
        <end position="222"/>
    </location>
</feature>
<feature type="turn" evidence="5">
    <location>
        <begin position="224"/>
        <end position="226"/>
    </location>
</feature>
<feature type="helix" evidence="5">
    <location>
        <begin position="228"/>
        <end position="236"/>
    </location>
</feature>
<feature type="helix" evidence="5">
    <location>
        <begin position="238"/>
        <end position="240"/>
    </location>
</feature>
<feature type="strand" evidence="5">
    <location>
        <begin position="248"/>
        <end position="250"/>
    </location>
</feature>
<feature type="helix" evidence="5">
    <location>
        <begin position="266"/>
        <end position="272"/>
    </location>
</feature>
<feature type="strand" evidence="5">
    <location>
        <begin position="279"/>
        <end position="283"/>
    </location>
</feature>
<feature type="helix" evidence="5">
    <location>
        <begin position="292"/>
        <end position="305"/>
    </location>
</feature>
<feature type="strand" evidence="5">
    <location>
        <begin position="308"/>
        <end position="312"/>
    </location>
</feature>
<feature type="strand" evidence="5">
    <location>
        <begin position="315"/>
        <end position="318"/>
    </location>
</feature>
<feature type="helix" evidence="5">
    <location>
        <begin position="319"/>
        <end position="321"/>
    </location>
</feature>
<feature type="helix" evidence="5">
    <location>
        <begin position="326"/>
        <end position="330"/>
    </location>
</feature>
<feature type="helix" evidence="5">
    <location>
        <begin position="332"/>
        <end position="338"/>
    </location>
</feature>
<feature type="strand" evidence="5">
    <location>
        <begin position="342"/>
        <end position="347"/>
    </location>
</feature>
<feature type="helix" evidence="5">
    <location>
        <begin position="351"/>
        <end position="355"/>
    </location>
</feature>
<feature type="strand" evidence="5">
    <location>
        <begin position="360"/>
        <end position="365"/>
    </location>
</feature>
<feature type="helix" evidence="5">
    <location>
        <begin position="369"/>
        <end position="378"/>
    </location>
</feature>
<feature type="strand" evidence="5">
    <location>
        <begin position="382"/>
        <end position="384"/>
    </location>
</feature>
<feature type="helix" evidence="5">
    <location>
        <begin position="391"/>
        <end position="400"/>
    </location>
</feature>
<feature type="strand" evidence="5">
    <location>
        <begin position="403"/>
        <end position="406"/>
    </location>
</feature>
<feature type="helix" evidence="5">
    <location>
        <begin position="421"/>
        <end position="433"/>
    </location>
</feature>
<feature type="helix" evidence="5">
    <location>
        <begin position="435"/>
        <end position="452"/>
    </location>
</feature>
<feature type="helix" evidence="5">
    <location>
        <begin position="457"/>
        <end position="470"/>
    </location>
</feature>